<organism>
    <name type="scientific">Acholeplasma laidlawii (strain PG-8A)</name>
    <dbReference type="NCBI Taxonomy" id="441768"/>
    <lineage>
        <taxon>Bacteria</taxon>
        <taxon>Bacillati</taxon>
        <taxon>Mycoplasmatota</taxon>
        <taxon>Mollicutes</taxon>
        <taxon>Acholeplasmatales</taxon>
        <taxon>Acholeplasmataceae</taxon>
        <taxon>Acholeplasma</taxon>
    </lineage>
</organism>
<feature type="chain" id="PRO_1000079395" description="Small ribosomal subunit protein bS21">
    <location>
        <begin position="1"/>
        <end position="59"/>
    </location>
</feature>
<dbReference type="EMBL" id="CP000896">
    <property type="protein sequence ID" value="ABX81562.1"/>
    <property type="molecule type" value="Genomic_DNA"/>
</dbReference>
<dbReference type="RefSeq" id="WP_012242893.1">
    <property type="nucleotide sequence ID" value="NC_010163.1"/>
</dbReference>
<dbReference type="SMR" id="A9NGT2"/>
<dbReference type="STRING" id="441768.ACL_0952"/>
<dbReference type="GeneID" id="41339100"/>
<dbReference type="KEGG" id="acl:ACL_0952"/>
<dbReference type="eggNOG" id="COG0828">
    <property type="taxonomic scope" value="Bacteria"/>
</dbReference>
<dbReference type="HOGENOM" id="CLU_159258_3_2_14"/>
<dbReference type="OrthoDB" id="9799244at2"/>
<dbReference type="Proteomes" id="UP000008558">
    <property type="component" value="Chromosome"/>
</dbReference>
<dbReference type="GO" id="GO:1990904">
    <property type="term" value="C:ribonucleoprotein complex"/>
    <property type="evidence" value="ECO:0007669"/>
    <property type="project" value="UniProtKB-KW"/>
</dbReference>
<dbReference type="GO" id="GO:0005840">
    <property type="term" value="C:ribosome"/>
    <property type="evidence" value="ECO:0007669"/>
    <property type="project" value="UniProtKB-KW"/>
</dbReference>
<dbReference type="GO" id="GO:0003735">
    <property type="term" value="F:structural constituent of ribosome"/>
    <property type="evidence" value="ECO:0007669"/>
    <property type="project" value="InterPro"/>
</dbReference>
<dbReference type="GO" id="GO:0006412">
    <property type="term" value="P:translation"/>
    <property type="evidence" value="ECO:0007669"/>
    <property type="project" value="UniProtKB-UniRule"/>
</dbReference>
<dbReference type="Gene3D" id="1.20.5.1150">
    <property type="entry name" value="Ribosomal protein S8"/>
    <property type="match status" value="1"/>
</dbReference>
<dbReference type="HAMAP" id="MF_00358">
    <property type="entry name" value="Ribosomal_bS21"/>
    <property type="match status" value="1"/>
</dbReference>
<dbReference type="InterPro" id="IPR001911">
    <property type="entry name" value="Ribosomal_bS21"/>
</dbReference>
<dbReference type="InterPro" id="IPR038380">
    <property type="entry name" value="Ribosomal_bS21_sf"/>
</dbReference>
<dbReference type="NCBIfam" id="TIGR00030">
    <property type="entry name" value="S21p"/>
    <property type="match status" value="1"/>
</dbReference>
<dbReference type="Pfam" id="PF01165">
    <property type="entry name" value="Ribosomal_S21"/>
    <property type="match status" value="1"/>
</dbReference>
<dbReference type="PRINTS" id="PR00976">
    <property type="entry name" value="RIBOSOMALS21"/>
</dbReference>
<evidence type="ECO:0000255" key="1">
    <source>
        <dbReference type="HAMAP-Rule" id="MF_00358"/>
    </source>
</evidence>
<evidence type="ECO:0000305" key="2"/>
<keyword id="KW-1185">Reference proteome</keyword>
<keyword id="KW-0687">Ribonucleoprotein</keyword>
<keyword id="KW-0689">Ribosomal protein</keyword>
<comment type="similarity">
    <text evidence="1">Belongs to the bacterial ribosomal protein bS21 family.</text>
</comment>
<accession>A9NGT2</accession>
<gene>
    <name evidence="1" type="primary">rpsU</name>
    <name type="ordered locus">ACL_0952</name>
</gene>
<proteinExistence type="inferred from homology"/>
<name>RS21_ACHLI</name>
<protein>
    <recommendedName>
        <fullName evidence="1">Small ribosomal subunit protein bS21</fullName>
    </recommendedName>
    <alternativeName>
        <fullName evidence="2">30S ribosomal protein S21</fullName>
    </alternativeName>
</protein>
<sequence>MSKTEVRKGETIEDTLRRFKRTVSKDGTLVEARKREYYIKPGVDRRMKAKAAKTKKKKR</sequence>
<reference key="1">
    <citation type="journal article" date="2011" name="J. Bacteriol.">
        <title>Complete genome and proteome of Acholeplasma laidlawii.</title>
        <authorList>
            <person name="Lazarev V.N."/>
            <person name="Levitskii S.A."/>
            <person name="Basovskii Y.I."/>
            <person name="Chukin M.M."/>
            <person name="Akopian T.A."/>
            <person name="Vereshchagin V.V."/>
            <person name="Kostrjukova E.S."/>
            <person name="Kovaleva G.Y."/>
            <person name="Kazanov M.D."/>
            <person name="Malko D.B."/>
            <person name="Vitreschak A.G."/>
            <person name="Sernova N.V."/>
            <person name="Gelfand M.S."/>
            <person name="Demina I.A."/>
            <person name="Serebryakova M.V."/>
            <person name="Galyamina M.A."/>
            <person name="Vtyurin N.N."/>
            <person name="Rogov S.I."/>
            <person name="Alexeev D.G."/>
            <person name="Ladygina V.G."/>
            <person name="Govorun V.M."/>
        </authorList>
    </citation>
    <scope>NUCLEOTIDE SEQUENCE [LARGE SCALE GENOMIC DNA]</scope>
    <source>
        <strain>PG-8A</strain>
    </source>
</reference>